<accession>Q5GWS8</accession>
<proteinExistence type="inferred from homology"/>
<evidence type="ECO:0000250" key="1"/>
<evidence type="ECO:0000255" key="2">
    <source>
        <dbReference type="HAMAP-Rule" id="MF_00403"/>
    </source>
</evidence>
<evidence type="ECO:0000256" key="3">
    <source>
        <dbReference type="SAM" id="MobiDB-lite"/>
    </source>
</evidence>
<evidence type="ECO:0000305" key="4"/>
<feature type="chain" id="PRO_0000226426" description="Small ribosomal subunit protein uS12">
    <location>
        <begin position="1"/>
        <end position="124"/>
    </location>
</feature>
<feature type="region of interest" description="Disordered" evidence="3">
    <location>
        <begin position="1"/>
        <end position="24"/>
    </location>
</feature>
<feature type="modified residue" description="3-methylthioaspartic acid" evidence="1">
    <location>
        <position position="89"/>
    </location>
</feature>
<dbReference type="EMBL" id="AE013598">
    <property type="protein sequence ID" value="AAW76843.1"/>
    <property type="status" value="ALT_INIT"/>
    <property type="molecule type" value="Genomic_DNA"/>
</dbReference>
<dbReference type="SMR" id="Q5GWS8"/>
<dbReference type="STRING" id="291331.XOO3589"/>
<dbReference type="KEGG" id="xoo:XOO3589"/>
<dbReference type="HOGENOM" id="CLU_104295_0_0_6"/>
<dbReference type="Proteomes" id="UP000006735">
    <property type="component" value="Chromosome"/>
</dbReference>
<dbReference type="GO" id="GO:0015935">
    <property type="term" value="C:small ribosomal subunit"/>
    <property type="evidence" value="ECO:0007669"/>
    <property type="project" value="InterPro"/>
</dbReference>
<dbReference type="GO" id="GO:0019843">
    <property type="term" value="F:rRNA binding"/>
    <property type="evidence" value="ECO:0007669"/>
    <property type="project" value="UniProtKB-UniRule"/>
</dbReference>
<dbReference type="GO" id="GO:0003735">
    <property type="term" value="F:structural constituent of ribosome"/>
    <property type="evidence" value="ECO:0007669"/>
    <property type="project" value="InterPro"/>
</dbReference>
<dbReference type="GO" id="GO:0000049">
    <property type="term" value="F:tRNA binding"/>
    <property type="evidence" value="ECO:0007669"/>
    <property type="project" value="UniProtKB-UniRule"/>
</dbReference>
<dbReference type="GO" id="GO:0006412">
    <property type="term" value="P:translation"/>
    <property type="evidence" value="ECO:0007669"/>
    <property type="project" value="UniProtKB-UniRule"/>
</dbReference>
<dbReference type="CDD" id="cd03368">
    <property type="entry name" value="Ribosomal_S12"/>
    <property type="match status" value="1"/>
</dbReference>
<dbReference type="FunFam" id="2.40.50.140:FF:000001">
    <property type="entry name" value="30S ribosomal protein S12"/>
    <property type="match status" value="1"/>
</dbReference>
<dbReference type="Gene3D" id="2.40.50.140">
    <property type="entry name" value="Nucleic acid-binding proteins"/>
    <property type="match status" value="1"/>
</dbReference>
<dbReference type="HAMAP" id="MF_00403_B">
    <property type="entry name" value="Ribosomal_uS12_B"/>
    <property type="match status" value="1"/>
</dbReference>
<dbReference type="InterPro" id="IPR012340">
    <property type="entry name" value="NA-bd_OB-fold"/>
</dbReference>
<dbReference type="InterPro" id="IPR006032">
    <property type="entry name" value="Ribosomal_uS12"/>
</dbReference>
<dbReference type="InterPro" id="IPR005679">
    <property type="entry name" value="Ribosomal_uS12_bac"/>
</dbReference>
<dbReference type="NCBIfam" id="TIGR00981">
    <property type="entry name" value="rpsL_bact"/>
    <property type="match status" value="1"/>
</dbReference>
<dbReference type="PANTHER" id="PTHR11652">
    <property type="entry name" value="30S RIBOSOMAL PROTEIN S12 FAMILY MEMBER"/>
    <property type="match status" value="1"/>
</dbReference>
<dbReference type="Pfam" id="PF00164">
    <property type="entry name" value="Ribosom_S12_S23"/>
    <property type="match status" value="1"/>
</dbReference>
<dbReference type="PIRSF" id="PIRSF002133">
    <property type="entry name" value="Ribosomal_S12/S23"/>
    <property type="match status" value="1"/>
</dbReference>
<dbReference type="PRINTS" id="PR01034">
    <property type="entry name" value="RIBOSOMALS12"/>
</dbReference>
<dbReference type="SUPFAM" id="SSF50249">
    <property type="entry name" value="Nucleic acid-binding proteins"/>
    <property type="match status" value="1"/>
</dbReference>
<dbReference type="PROSITE" id="PS00055">
    <property type="entry name" value="RIBOSOMAL_S12"/>
    <property type="match status" value="1"/>
</dbReference>
<comment type="function">
    <text evidence="2">With S4 and S5 plays an important role in translational accuracy.</text>
</comment>
<comment type="function">
    <text evidence="2">Interacts with and stabilizes bases of the 16S rRNA that are involved in tRNA selection in the A site and with the mRNA backbone. Located at the interface of the 30S and 50S subunits, it traverses the body of the 30S subunit contacting proteins on the other side and probably holding the rRNA structure together. The combined cluster of proteins S8, S12 and S17 appears to hold together the shoulder and platform of the 30S subunit.</text>
</comment>
<comment type="subunit">
    <text evidence="2">Part of the 30S ribosomal subunit. Contacts proteins S8 and S17. May interact with IF1 in the 30S initiation complex.</text>
</comment>
<comment type="similarity">
    <text evidence="2">Belongs to the universal ribosomal protein uS12 family.</text>
</comment>
<comment type="sequence caution" evidence="4">
    <conflict type="erroneous initiation">
        <sequence resource="EMBL-CDS" id="AAW76843"/>
    </conflict>
</comment>
<sequence>MTTINQLVRKPRQATTYKSASPALDKCPQRRGVCTRVYTTTPKKPNSALRKVAKVRLTNQEEVISYIGGEGHNLQEHSVVLIRGGRVKDLPGVRYHTVRGSLDAAGVAKRRQGRSKYGAKRPKS</sequence>
<reference key="1">
    <citation type="journal article" date="2005" name="Nucleic Acids Res.">
        <title>The genome sequence of Xanthomonas oryzae pathovar oryzae KACC10331, the bacterial blight pathogen of rice.</title>
        <authorList>
            <person name="Lee B.-M."/>
            <person name="Park Y.-J."/>
            <person name="Park D.-S."/>
            <person name="Kang H.-W."/>
            <person name="Kim J.-G."/>
            <person name="Song E.-S."/>
            <person name="Park I.-C."/>
            <person name="Yoon U.-H."/>
            <person name="Hahn J.-H."/>
            <person name="Koo B.-S."/>
            <person name="Lee G.-B."/>
            <person name="Kim H."/>
            <person name="Park H.-S."/>
            <person name="Yoon K.-O."/>
            <person name="Kim J.-H."/>
            <person name="Jung C.-H."/>
            <person name="Koh N.-H."/>
            <person name="Seo J.-S."/>
            <person name="Go S.-J."/>
        </authorList>
    </citation>
    <scope>NUCLEOTIDE SEQUENCE [LARGE SCALE GENOMIC DNA]</scope>
    <source>
        <strain>KACC10331 / KXO85</strain>
    </source>
</reference>
<organism>
    <name type="scientific">Xanthomonas oryzae pv. oryzae (strain KACC10331 / KXO85)</name>
    <dbReference type="NCBI Taxonomy" id="291331"/>
    <lineage>
        <taxon>Bacteria</taxon>
        <taxon>Pseudomonadati</taxon>
        <taxon>Pseudomonadota</taxon>
        <taxon>Gammaproteobacteria</taxon>
        <taxon>Lysobacterales</taxon>
        <taxon>Lysobacteraceae</taxon>
        <taxon>Xanthomonas</taxon>
    </lineage>
</organism>
<name>RS12_XANOR</name>
<protein>
    <recommendedName>
        <fullName evidence="2">Small ribosomal subunit protein uS12</fullName>
    </recommendedName>
    <alternativeName>
        <fullName evidence="4">30S ribosomal protein S12</fullName>
    </alternativeName>
</protein>
<gene>
    <name evidence="2" type="primary">rpsL</name>
    <name type="ordered locus">XOO3589</name>
</gene>
<keyword id="KW-0488">Methylation</keyword>
<keyword id="KW-1185">Reference proteome</keyword>
<keyword id="KW-0687">Ribonucleoprotein</keyword>
<keyword id="KW-0689">Ribosomal protein</keyword>
<keyword id="KW-0694">RNA-binding</keyword>
<keyword id="KW-0699">rRNA-binding</keyword>
<keyword id="KW-0820">tRNA-binding</keyword>